<comment type="function">
    <text evidence="1">Catalyzes the formation of phosphatidylethanolamine (PtdEtn) from phosphatidylserine (PtdSer).</text>
</comment>
<comment type="catalytic activity">
    <reaction evidence="1">
        <text>a 1,2-diacyl-sn-glycero-3-phospho-L-serine + H(+) = a 1,2-diacyl-sn-glycero-3-phosphoethanolamine + CO2</text>
        <dbReference type="Rhea" id="RHEA:20828"/>
        <dbReference type="ChEBI" id="CHEBI:15378"/>
        <dbReference type="ChEBI" id="CHEBI:16526"/>
        <dbReference type="ChEBI" id="CHEBI:57262"/>
        <dbReference type="ChEBI" id="CHEBI:64612"/>
        <dbReference type="EC" id="4.1.1.65"/>
    </reaction>
</comment>
<comment type="cofactor">
    <cofactor evidence="1">
        <name>pyruvate</name>
        <dbReference type="ChEBI" id="CHEBI:15361"/>
    </cofactor>
    <text evidence="1">Binds 1 pyruvoyl group covalently per subunit.</text>
</comment>
<comment type="pathway">
    <text evidence="1">Phospholipid metabolism; phosphatidylethanolamine biosynthesis; phosphatidylethanolamine from CDP-diacylglycerol: step 2/2.</text>
</comment>
<comment type="subunit">
    <text evidence="1">Heterodimer of a large membrane-associated beta subunit and a small pyruvoyl-containing alpha subunit.</text>
</comment>
<comment type="subcellular location">
    <subcellularLocation>
        <location evidence="1">Cell membrane</location>
        <topology evidence="1">Peripheral membrane protein</topology>
    </subcellularLocation>
</comment>
<comment type="PTM">
    <text evidence="1">Is synthesized initially as an inactive proenzyme. Formation of the active enzyme involves a self-maturation process in which the active site pyruvoyl group is generated from an internal serine residue via an autocatalytic post-translational modification. Two non-identical subunits are generated from the proenzyme in this reaction, and the pyruvate is formed at the N-terminus of the alpha chain, which is derived from the carboxyl end of the proenzyme. The autoendoproteolytic cleavage occurs by a canonical serine protease mechanism, in which the side chain hydroxyl group of the serine supplies its oxygen atom to form the C-terminus of the beta chain, while the remainder of the serine residue undergoes an oxidative deamination to produce ammonia and the pyruvoyl prosthetic group on the alpha chain. During this reaction, the Ser that is part of the protease active site of the proenzyme becomes the pyruvoyl prosthetic group, which constitutes an essential element of the active site of the mature decarboxylase.</text>
</comment>
<comment type="similarity">
    <text evidence="1">Belongs to the phosphatidylserine decarboxylase family. PSD-B subfamily. Prokaryotic type I sub-subfamily.</text>
</comment>
<name>PSD_DELAS</name>
<protein>
    <recommendedName>
        <fullName evidence="1">Phosphatidylserine decarboxylase proenzyme</fullName>
        <ecNumber evidence="1">4.1.1.65</ecNumber>
    </recommendedName>
    <component>
        <recommendedName>
            <fullName evidence="1">Phosphatidylserine decarboxylase alpha chain</fullName>
        </recommendedName>
    </component>
    <component>
        <recommendedName>
            <fullName evidence="1">Phosphatidylserine decarboxylase beta chain</fullName>
        </recommendedName>
    </component>
</protein>
<accession>A9C3H8</accession>
<evidence type="ECO:0000255" key="1">
    <source>
        <dbReference type="HAMAP-Rule" id="MF_00662"/>
    </source>
</evidence>
<gene>
    <name evidence="1" type="primary">psd</name>
    <name type="ordered locus">Daci_4660</name>
</gene>
<reference key="1">
    <citation type="submission" date="2007-11" db="EMBL/GenBank/DDBJ databases">
        <title>Complete sequence of Delftia acidovorans DSM 14801 / SPH-1.</title>
        <authorList>
            <person name="Copeland A."/>
            <person name="Lucas S."/>
            <person name="Lapidus A."/>
            <person name="Barry K."/>
            <person name="Glavina del Rio T."/>
            <person name="Dalin E."/>
            <person name="Tice H."/>
            <person name="Pitluck S."/>
            <person name="Lowry S."/>
            <person name="Clum A."/>
            <person name="Schmutz J."/>
            <person name="Larimer F."/>
            <person name="Land M."/>
            <person name="Hauser L."/>
            <person name="Kyrpides N."/>
            <person name="Kim E."/>
            <person name="Schleheck D."/>
            <person name="Richardson P."/>
        </authorList>
    </citation>
    <scope>NUCLEOTIDE SEQUENCE [LARGE SCALE GENOMIC DNA]</scope>
    <source>
        <strain>DSM 14801 / SPH-1</strain>
    </source>
</reference>
<keyword id="KW-1003">Cell membrane</keyword>
<keyword id="KW-0210">Decarboxylase</keyword>
<keyword id="KW-0444">Lipid biosynthesis</keyword>
<keyword id="KW-0443">Lipid metabolism</keyword>
<keyword id="KW-0456">Lyase</keyword>
<keyword id="KW-0472">Membrane</keyword>
<keyword id="KW-0594">Phospholipid biosynthesis</keyword>
<keyword id="KW-1208">Phospholipid metabolism</keyword>
<keyword id="KW-0670">Pyruvate</keyword>
<keyword id="KW-1185">Reference proteome</keyword>
<keyword id="KW-0865">Zymogen</keyword>
<sequence>MSDRLAVLSQYLLPKQALTAVMGRLAQARAGDLTTAVIRRFIARYGVDMSEAADSDPAAYASFNEFFTRALKPGVRPLASADWVCPVDGAISQIGAIEGEQIFQAKGHSYSATALVGGDAQLARQFDNGHFATIYLSPRDYHRIHMPCAGRLRRMIYVPGELFSVNPVTARGVPGLFARNERVVCVFDTDHGPMVLVLVGATIVGSMGTVWHGIVNPPRPGRIQDWRYDDQSIVLGQGEEMGRFQLGSTVVMLFPASAGLRFNGQWTHAAPVRLGQKMAGRNEA</sequence>
<dbReference type="EC" id="4.1.1.65" evidence="1"/>
<dbReference type="EMBL" id="CP000884">
    <property type="protein sequence ID" value="ABX37289.1"/>
    <property type="molecule type" value="Genomic_DNA"/>
</dbReference>
<dbReference type="SMR" id="A9C3H8"/>
<dbReference type="STRING" id="398578.Daci_4660"/>
<dbReference type="GeneID" id="24115876"/>
<dbReference type="KEGG" id="dac:Daci_4660"/>
<dbReference type="eggNOG" id="COG0688">
    <property type="taxonomic scope" value="Bacteria"/>
</dbReference>
<dbReference type="HOGENOM" id="CLU_029061_4_1_4"/>
<dbReference type="UniPathway" id="UPA00558">
    <property type="reaction ID" value="UER00616"/>
</dbReference>
<dbReference type="Proteomes" id="UP000000784">
    <property type="component" value="Chromosome"/>
</dbReference>
<dbReference type="GO" id="GO:0005886">
    <property type="term" value="C:plasma membrane"/>
    <property type="evidence" value="ECO:0007669"/>
    <property type="project" value="UniProtKB-SubCell"/>
</dbReference>
<dbReference type="GO" id="GO:0004609">
    <property type="term" value="F:phosphatidylserine decarboxylase activity"/>
    <property type="evidence" value="ECO:0007669"/>
    <property type="project" value="UniProtKB-UniRule"/>
</dbReference>
<dbReference type="GO" id="GO:0006646">
    <property type="term" value="P:phosphatidylethanolamine biosynthetic process"/>
    <property type="evidence" value="ECO:0007669"/>
    <property type="project" value="UniProtKB-UniRule"/>
</dbReference>
<dbReference type="HAMAP" id="MF_00662">
    <property type="entry name" value="PS_decarb_PSD_B_type1"/>
    <property type="match status" value="1"/>
</dbReference>
<dbReference type="InterPro" id="IPR003817">
    <property type="entry name" value="PS_Dcarbxylase"/>
</dbReference>
<dbReference type="InterPro" id="IPR033177">
    <property type="entry name" value="PSD-B"/>
</dbReference>
<dbReference type="InterPro" id="IPR033178">
    <property type="entry name" value="PSD_type1_pro"/>
</dbReference>
<dbReference type="NCBIfam" id="TIGR00163">
    <property type="entry name" value="PS_decarb"/>
    <property type="match status" value="1"/>
</dbReference>
<dbReference type="PANTHER" id="PTHR10067">
    <property type="entry name" value="PHOSPHATIDYLSERINE DECARBOXYLASE"/>
    <property type="match status" value="1"/>
</dbReference>
<dbReference type="PANTHER" id="PTHR10067:SF6">
    <property type="entry name" value="PHOSPHATIDYLSERINE DECARBOXYLASE PROENZYME, MITOCHONDRIAL"/>
    <property type="match status" value="1"/>
</dbReference>
<dbReference type="Pfam" id="PF02666">
    <property type="entry name" value="PS_Dcarbxylase"/>
    <property type="match status" value="1"/>
</dbReference>
<organism>
    <name type="scientific">Delftia acidovorans (strain DSM 14801 / SPH-1)</name>
    <dbReference type="NCBI Taxonomy" id="398578"/>
    <lineage>
        <taxon>Bacteria</taxon>
        <taxon>Pseudomonadati</taxon>
        <taxon>Pseudomonadota</taxon>
        <taxon>Betaproteobacteria</taxon>
        <taxon>Burkholderiales</taxon>
        <taxon>Comamonadaceae</taxon>
        <taxon>Delftia</taxon>
    </lineage>
</organism>
<proteinExistence type="inferred from homology"/>
<feature type="chain" id="PRO_1000131356" description="Phosphatidylserine decarboxylase beta chain" evidence="1">
    <location>
        <begin position="1"/>
        <end position="247"/>
    </location>
</feature>
<feature type="chain" id="PRO_1000131357" description="Phosphatidylserine decarboxylase alpha chain" evidence="1">
    <location>
        <begin position="248"/>
        <end position="284"/>
    </location>
</feature>
<feature type="active site" description="Charge relay system; for autoendoproteolytic cleavage activity" evidence="1">
    <location>
        <position position="88"/>
    </location>
</feature>
<feature type="active site" description="Charge relay system; for autoendoproteolytic cleavage activity" evidence="1">
    <location>
        <position position="145"/>
    </location>
</feature>
<feature type="active site" description="Charge relay system; for autoendoproteolytic cleavage activity" evidence="1">
    <location>
        <position position="248"/>
    </location>
</feature>
<feature type="active site" description="Schiff-base intermediate with substrate; via pyruvic acid; for decarboxylase activity" evidence="1">
    <location>
        <position position="248"/>
    </location>
</feature>
<feature type="site" description="Cleavage (non-hydrolytic); by autocatalysis" evidence="1">
    <location>
        <begin position="247"/>
        <end position="248"/>
    </location>
</feature>
<feature type="modified residue" description="Pyruvic acid (Ser); by autocatalysis" evidence="1">
    <location>
        <position position="248"/>
    </location>
</feature>